<name>YI177_YEAST</name>
<keyword id="KW-0472">Membrane</keyword>
<keyword id="KW-0812">Transmembrane</keyword>
<keyword id="KW-1133">Transmembrane helix</keyword>
<proteinExistence type="uncertain"/>
<comment type="subcellular location">
    <subcellularLocation>
        <location evidence="2">Membrane</location>
        <topology evidence="2">Multi-pass membrane protein</topology>
    </subcellularLocation>
</comment>
<comment type="miscellaneous">
    <text evidence="2">Completely overlaps YJL225C.</text>
</comment>
<comment type="similarity">
    <text evidence="2">Belongs to the UPF0479 family.</text>
</comment>
<comment type="caution">
    <text evidence="3">Product of a dubious gene prediction unlikely to encode a functional protein. Because of that it is not part of the S.cerevisiae S288c complete/reference proteome set.</text>
</comment>
<organism>
    <name type="scientific">Saccharomyces cerevisiae (strain ATCC 204508 / S288c)</name>
    <name type="common">Baker's yeast</name>
    <dbReference type="NCBI Taxonomy" id="559292"/>
    <lineage>
        <taxon>Eukaryota</taxon>
        <taxon>Fungi</taxon>
        <taxon>Dikarya</taxon>
        <taxon>Ascomycota</taxon>
        <taxon>Saccharomycotina</taxon>
        <taxon>Saccharomycetes</taxon>
        <taxon>Saccharomycetales</taxon>
        <taxon>Saccharomycetaceae</taxon>
        <taxon>Saccharomyces</taxon>
    </lineage>
</organism>
<feature type="chain" id="PRO_0000406015" description="Putative UPF0479 protein YJL225W-A">
    <location>
        <begin position="1"/>
        <end position="160"/>
    </location>
</feature>
<feature type="transmembrane region" description="Helical" evidence="1">
    <location>
        <begin position="39"/>
        <end position="59"/>
    </location>
</feature>
<feature type="transmembrane region" description="Helical" evidence="1">
    <location>
        <begin position="136"/>
        <end position="156"/>
    </location>
</feature>
<protein>
    <recommendedName>
        <fullName>Putative UPF0479 protein YJL225W-A</fullName>
    </recommendedName>
</protein>
<evidence type="ECO:0000255" key="1"/>
<evidence type="ECO:0000305" key="2"/>
<evidence type="ECO:0000305" key="3">
    <source>
    </source>
</evidence>
<reference key="1">
    <citation type="journal article" date="1996" name="EMBO J.">
        <title>Complete nucleotide sequence of Saccharomyces cerevisiae chromosome X.</title>
        <authorList>
            <person name="Galibert F."/>
            <person name="Alexandraki D."/>
            <person name="Baur A."/>
            <person name="Boles E."/>
            <person name="Chalwatzis N."/>
            <person name="Chuat J.-C."/>
            <person name="Coster F."/>
            <person name="Cziepluch C."/>
            <person name="de Haan M."/>
            <person name="Domdey H."/>
            <person name="Durand P."/>
            <person name="Entian K.-D."/>
            <person name="Gatius M."/>
            <person name="Goffeau A."/>
            <person name="Grivell L.A."/>
            <person name="Hennemann A."/>
            <person name="Herbert C.J."/>
            <person name="Heumann K."/>
            <person name="Hilger F."/>
            <person name="Hollenberg C.P."/>
            <person name="Huang M.-E."/>
            <person name="Jacq C."/>
            <person name="Jauniaux J.-C."/>
            <person name="Katsoulou C."/>
            <person name="Kirchrath L."/>
            <person name="Kleine K."/>
            <person name="Kordes E."/>
            <person name="Koetter P."/>
            <person name="Liebl S."/>
            <person name="Louis E.J."/>
            <person name="Manus V."/>
            <person name="Mewes H.-W."/>
            <person name="Miosga T."/>
            <person name="Obermaier B."/>
            <person name="Perea J."/>
            <person name="Pohl T.M."/>
            <person name="Portetelle D."/>
            <person name="Pujol A."/>
            <person name="Purnelle B."/>
            <person name="Ramezani Rad M."/>
            <person name="Rasmussen S.W."/>
            <person name="Rose M."/>
            <person name="Rossau R."/>
            <person name="Schaaff-Gerstenschlaeger I."/>
            <person name="Smits P.H.M."/>
            <person name="Scarcez T."/>
            <person name="Soriano N."/>
            <person name="To Van D."/>
            <person name="Tzermia M."/>
            <person name="Van Broekhoven A."/>
            <person name="Vandenbol M."/>
            <person name="Wedler H."/>
            <person name="von Wettstein D."/>
            <person name="Wambutt R."/>
            <person name="Zagulski M."/>
            <person name="Zollner A."/>
            <person name="Karpfinger-Hartl L."/>
        </authorList>
    </citation>
    <scope>NUCLEOTIDE SEQUENCE [LARGE SCALE GENOMIC DNA]</scope>
    <source>
        <strain>ATCC 204508 / S288c</strain>
    </source>
</reference>
<reference key="2">
    <citation type="journal article" date="2014" name="G3 (Bethesda)">
        <title>The reference genome sequence of Saccharomyces cerevisiae: Then and now.</title>
        <authorList>
            <person name="Engel S.R."/>
            <person name="Dietrich F.S."/>
            <person name="Fisk D.G."/>
            <person name="Binkley G."/>
            <person name="Balakrishnan R."/>
            <person name="Costanzo M.C."/>
            <person name="Dwight S.S."/>
            <person name="Hitz B.C."/>
            <person name="Karra K."/>
            <person name="Nash R.S."/>
            <person name="Weng S."/>
            <person name="Wong E.D."/>
            <person name="Lloyd P."/>
            <person name="Skrzypek M.S."/>
            <person name="Miyasato S.R."/>
            <person name="Simison M."/>
            <person name="Cherry J.M."/>
        </authorList>
    </citation>
    <scope>GENOME REANNOTATION</scope>
    <source>
        <strain>ATCC 204508 / S288c</strain>
    </source>
</reference>
<reference key="3">
    <citation type="journal article" date="2002" name="Nat. Biotechnol.">
        <title>An integrated approach for finding overlooked genes in yeast.</title>
        <authorList>
            <person name="Kumar A."/>
            <person name="Harrison P.M."/>
            <person name="Cheung K.-H."/>
            <person name="Lan N."/>
            <person name="Echols N."/>
            <person name="Bertone P."/>
            <person name="Miller P."/>
            <person name="Gerstein M.B."/>
            <person name="Snyder M."/>
        </authorList>
    </citation>
    <scope>NUCLEOTIDE SEQUENCE [GENOMIC DNA]</scope>
</reference>
<dbReference type="EMBL" id="Z49500">
    <property type="status" value="NOT_ANNOTATED_CDS"/>
    <property type="molecule type" value="Genomic_DNA"/>
</dbReference>
<dbReference type="EMBL" id="Z48148">
    <property type="status" value="NOT_ANNOTATED_CDS"/>
    <property type="molecule type" value="Genomic_DNA"/>
</dbReference>
<dbReference type="EMBL" id="AF480001">
    <property type="protein sequence ID" value="AAL79314.1"/>
    <property type="molecule type" value="Genomic_DNA"/>
</dbReference>
<dbReference type="STRING" id="4932.YIL177W-A"/>
<dbReference type="PaxDb" id="4932-YIL177W-A"/>
<dbReference type="EnsemblFungi" id="YIL177W-A_mRNA">
    <property type="protein sequence ID" value="YIL177W-A"/>
    <property type="gene ID" value="YIL177W-A"/>
</dbReference>
<dbReference type="EnsemblFungi" id="YJL225W-A_mRNA">
    <property type="protein sequence ID" value="YJL225W-A"/>
    <property type="gene ID" value="YJL225W-A"/>
</dbReference>
<dbReference type="AGR" id="SGD:S000028665"/>
<dbReference type="SGD" id="S000028665">
    <property type="gene designation" value="YJL225W-A"/>
</dbReference>
<dbReference type="GeneTree" id="ENSGT01120000276056"/>
<dbReference type="HOGENOM" id="CLU_139933_0_0_1"/>
<dbReference type="GO" id="GO:0016020">
    <property type="term" value="C:membrane"/>
    <property type="evidence" value="ECO:0007669"/>
    <property type="project" value="UniProtKB-SubCell"/>
</dbReference>
<accession>P0CL42</accession>
<accession>Q8TFD1</accession>
<gene>
    <name type="ordered locus">YJL225W-A</name>
</gene>
<sequence>MMPAKLQLDVLRTLQSSARHGTQTLKNSTFLERFHNNRIVFCLPFFLALFFVPVQKVLQHLCLRFTQVAPYFKIQLFDLPSRHAENLAPLLASCRIQYTNCFSSSSNGQVPSIISLYLRVDLSPFYAKIFQISYRVPMIWLDVFQVFFVFLVISQHSLHS</sequence>